<reference key="1">
    <citation type="journal article" date="2006" name="J. Bacteriol.">
        <title>Pathogenomic sequence analysis of Bacillus cereus and Bacillus thuringiensis isolates closely related to Bacillus anthracis.</title>
        <authorList>
            <person name="Han C.S."/>
            <person name="Xie G."/>
            <person name="Challacombe J.F."/>
            <person name="Altherr M.R."/>
            <person name="Bhotika S.S."/>
            <person name="Bruce D."/>
            <person name="Campbell C.S."/>
            <person name="Campbell M.L."/>
            <person name="Chen J."/>
            <person name="Chertkov O."/>
            <person name="Cleland C."/>
            <person name="Dimitrijevic M."/>
            <person name="Doggett N.A."/>
            <person name="Fawcett J.J."/>
            <person name="Glavina T."/>
            <person name="Goodwin L.A."/>
            <person name="Hill K.K."/>
            <person name="Hitchcock P."/>
            <person name="Jackson P.J."/>
            <person name="Keim P."/>
            <person name="Kewalramani A.R."/>
            <person name="Longmire J."/>
            <person name="Lucas S."/>
            <person name="Malfatti S."/>
            <person name="McMurry K."/>
            <person name="Meincke L.J."/>
            <person name="Misra M."/>
            <person name="Moseman B.L."/>
            <person name="Mundt M."/>
            <person name="Munk A.C."/>
            <person name="Okinaka R.T."/>
            <person name="Parson-Quintana B."/>
            <person name="Reilly L.P."/>
            <person name="Richardson P."/>
            <person name="Robinson D.L."/>
            <person name="Rubin E."/>
            <person name="Saunders E."/>
            <person name="Tapia R."/>
            <person name="Tesmer J.G."/>
            <person name="Thayer N."/>
            <person name="Thompson L.S."/>
            <person name="Tice H."/>
            <person name="Ticknor L.O."/>
            <person name="Wills P.L."/>
            <person name="Brettin T.S."/>
            <person name="Gilna P."/>
        </authorList>
    </citation>
    <scope>NUCLEOTIDE SEQUENCE [LARGE SCALE GENOMIC DNA]</scope>
    <source>
        <strain>97-27</strain>
    </source>
</reference>
<accession>Q6HED2</accession>
<gene>
    <name evidence="1" type="primary">mtnK</name>
    <name type="ordered locus">BT9727_3775</name>
</gene>
<sequence>MGYYSLTEVTAVQYAKEHGYFEKKANVVCHEIGDGNLNYVFKLDDGVKSIIIKQALPYAKVVGESWPLSIKRATIESKALQIFAKYVPEYVPVVYSHDEELAVTVIEDLSRLTITRKGLIDGEEYPLLSQHIGRFLANVLFYTSDFGLQSEEKRVLEGTFVNPDLCKITEDLVFTDPFGHYDTNDYESELQLAVDELWSDKILKLKVAQYKYKFLTRKEALIHGDLHTGSIFSSPSETKVIDPEFATYGPFGFDIGQFIANLLLNALSREEEQRGVLFFHIEKTWSYFVETFTKLWIGEGVEAYTKEKQWLPIILQNIFTDAVGFAGCELIRRTIGLAHVADLEEITNKETRIQAKKQAISLGKELIKYESKNADIQLFRTLFQQTVSGGIKA</sequence>
<organism>
    <name type="scientific">Bacillus thuringiensis subsp. konkukian (strain 97-27)</name>
    <dbReference type="NCBI Taxonomy" id="281309"/>
    <lineage>
        <taxon>Bacteria</taxon>
        <taxon>Bacillati</taxon>
        <taxon>Bacillota</taxon>
        <taxon>Bacilli</taxon>
        <taxon>Bacillales</taxon>
        <taxon>Bacillaceae</taxon>
        <taxon>Bacillus</taxon>
        <taxon>Bacillus cereus group</taxon>
    </lineage>
</organism>
<feature type="chain" id="PRO_0000357336" description="Methylthioribose kinase">
    <location>
        <begin position="1"/>
        <end position="393"/>
    </location>
</feature>
<feature type="binding site" evidence="1">
    <location>
        <position position="38"/>
    </location>
    <ligand>
        <name>ATP</name>
        <dbReference type="ChEBI" id="CHEBI:30616"/>
    </ligand>
</feature>
<feature type="binding site" evidence="1">
    <location>
        <position position="53"/>
    </location>
    <ligand>
        <name>ATP</name>
        <dbReference type="ChEBI" id="CHEBI:30616"/>
    </ligand>
</feature>
<feature type="binding site" evidence="1">
    <location>
        <begin position="107"/>
        <end position="109"/>
    </location>
    <ligand>
        <name>ATP</name>
        <dbReference type="ChEBI" id="CHEBI:30616"/>
    </ligand>
</feature>
<feature type="binding site" evidence="1">
    <location>
        <position position="225"/>
    </location>
    <ligand>
        <name>substrate</name>
    </ligand>
</feature>
<feature type="binding site" evidence="1">
    <location>
        <begin position="242"/>
        <end position="244"/>
    </location>
    <ligand>
        <name>ATP</name>
        <dbReference type="ChEBI" id="CHEBI:30616"/>
    </ligand>
</feature>
<feature type="binding site" evidence="1">
    <location>
        <position position="332"/>
    </location>
    <ligand>
        <name>substrate</name>
    </ligand>
</feature>
<dbReference type="EC" id="2.7.1.100" evidence="1"/>
<dbReference type="EMBL" id="AE017355">
    <property type="protein sequence ID" value="AAT61560.1"/>
    <property type="molecule type" value="Genomic_DNA"/>
</dbReference>
<dbReference type="RefSeq" id="WP_000542720.1">
    <property type="nucleotide sequence ID" value="NC_005957.1"/>
</dbReference>
<dbReference type="RefSeq" id="YP_038094.1">
    <property type="nucleotide sequence ID" value="NC_005957.1"/>
</dbReference>
<dbReference type="SMR" id="Q6HED2"/>
<dbReference type="KEGG" id="btk:BT9727_3775"/>
<dbReference type="PATRIC" id="fig|281309.8.peg.4025"/>
<dbReference type="HOGENOM" id="CLU_033681_0_0_9"/>
<dbReference type="UniPathway" id="UPA00904">
    <property type="reaction ID" value="UER00872"/>
</dbReference>
<dbReference type="Proteomes" id="UP000001301">
    <property type="component" value="Chromosome"/>
</dbReference>
<dbReference type="GO" id="GO:0005524">
    <property type="term" value="F:ATP binding"/>
    <property type="evidence" value="ECO:0007669"/>
    <property type="project" value="UniProtKB-UniRule"/>
</dbReference>
<dbReference type="GO" id="GO:0046522">
    <property type="term" value="F:S-methyl-5-thioribose kinase activity"/>
    <property type="evidence" value="ECO:0007669"/>
    <property type="project" value="UniProtKB-UniRule"/>
</dbReference>
<dbReference type="GO" id="GO:0019509">
    <property type="term" value="P:L-methionine salvage from methylthioadenosine"/>
    <property type="evidence" value="ECO:0007669"/>
    <property type="project" value="UniProtKB-UniRule"/>
</dbReference>
<dbReference type="FunFam" id="3.30.200.20:FF:000436">
    <property type="entry name" value="Methylthioribose kinase"/>
    <property type="match status" value="1"/>
</dbReference>
<dbReference type="FunFam" id="3.90.1200.10:FF:000008">
    <property type="entry name" value="Methylthioribose kinase"/>
    <property type="match status" value="1"/>
</dbReference>
<dbReference type="Gene3D" id="3.90.1200.10">
    <property type="match status" value="1"/>
</dbReference>
<dbReference type="Gene3D" id="3.30.200.20">
    <property type="entry name" value="Phosphorylase Kinase, domain 1"/>
    <property type="match status" value="1"/>
</dbReference>
<dbReference type="HAMAP" id="MF_01683">
    <property type="entry name" value="Salvage_MtnK"/>
    <property type="match status" value="1"/>
</dbReference>
<dbReference type="InterPro" id="IPR002575">
    <property type="entry name" value="Aminoglycoside_PTrfase"/>
</dbReference>
<dbReference type="InterPro" id="IPR011009">
    <property type="entry name" value="Kinase-like_dom_sf"/>
</dbReference>
<dbReference type="InterPro" id="IPR009212">
    <property type="entry name" value="Methylthioribose_kinase"/>
</dbReference>
<dbReference type="NCBIfam" id="TIGR01767">
    <property type="entry name" value="MTRK"/>
    <property type="match status" value="1"/>
</dbReference>
<dbReference type="PANTHER" id="PTHR34273">
    <property type="entry name" value="METHYLTHIORIBOSE KINASE"/>
    <property type="match status" value="1"/>
</dbReference>
<dbReference type="PANTHER" id="PTHR34273:SF2">
    <property type="entry name" value="METHYLTHIORIBOSE KINASE"/>
    <property type="match status" value="1"/>
</dbReference>
<dbReference type="Pfam" id="PF01636">
    <property type="entry name" value="APH"/>
    <property type="match status" value="1"/>
</dbReference>
<dbReference type="PIRSF" id="PIRSF031134">
    <property type="entry name" value="MTRK"/>
    <property type="match status" value="1"/>
</dbReference>
<dbReference type="SUPFAM" id="SSF56112">
    <property type="entry name" value="Protein kinase-like (PK-like)"/>
    <property type="match status" value="1"/>
</dbReference>
<proteinExistence type="inferred from homology"/>
<keyword id="KW-0028">Amino-acid biosynthesis</keyword>
<keyword id="KW-0067">ATP-binding</keyword>
<keyword id="KW-0418">Kinase</keyword>
<keyword id="KW-0486">Methionine biosynthesis</keyword>
<keyword id="KW-0547">Nucleotide-binding</keyword>
<keyword id="KW-0808">Transferase</keyword>
<comment type="function">
    <text evidence="1">Catalyzes the phosphorylation of methylthioribose into methylthioribose-1-phosphate.</text>
</comment>
<comment type="catalytic activity">
    <reaction evidence="1">
        <text>5-(methylsulfanyl)-D-ribose + ATP = 5-(methylsulfanyl)-alpha-D-ribose 1-phosphate + ADP + H(+)</text>
        <dbReference type="Rhea" id="RHEA:22312"/>
        <dbReference type="ChEBI" id="CHEBI:15378"/>
        <dbReference type="ChEBI" id="CHEBI:30616"/>
        <dbReference type="ChEBI" id="CHEBI:58533"/>
        <dbReference type="ChEBI" id="CHEBI:78440"/>
        <dbReference type="ChEBI" id="CHEBI:456216"/>
        <dbReference type="EC" id="2.7.1.100"/>
    </reaction>
</comment>
<comment type="pathway">
    <text evidence="1">Amino-acid biosynthesis; L-methionine biosynthesis via salvage pathway; S-methyl-5-thio-alpha-D-ribose 1-phosphate from S-methyl-5'-thioadenosine (hydrolase route): step 2/2.</text>
</comment>
<comment type="subunit">
    <text evidence="1">Homodimer.</text>
</comment>
<comment type="similarity">
    <text evidence="1">Belongs to the methylthioribose kinase family.</text>
</comment>
<protein>
    <recommendedName>
        <fullName evidence="1">Methylthioribose kinase</fullName>
        <shortName evidence="1">MTR kinase</shortName>
        <ecNumber evidence="1">2.7.1.100</ecNumber>
    </recommendedName>
</protein>
<name>MTNK_BACHK</name>
<evidence type="ECO:0000255" key="1">
    <source>
        <dbReference type="HAMAP-Rule" id="MF_01683"/>
    </source>
</evidence>